<proteinExistence type="inferred from homology"/>
<accession>P0CM01</accession>
<accession>Q55Y48</accession>
<accession>Q5KLU1</accession>
<name>SDHF3_CRYNB</name>
<gene>
    <name type="ordered locus">CNBB1660</name>
</gene>
<reference key="1">
    <citation type="journal article" date="2005" name="Science">
        <title>The genome of the basidiomycetous yeast and human pathogen Cryptococcus neoformans.</title>
        <authorList>
            <person name="Loftus B.J."/>
            <person name="Fung E."/>
            <person name="Roncaglia P."/>
            <person name="Rowley D."/>
            <person name="Amedeo P."/>
            <person name="Bruno D."/>
            <person name="Vamathevan J."/>
            <person name="Miranda M."/>
            <person name="Anderson I.J."/>
            <person name="Fraser J.A."/>
            <person name="Allen J.E."/>
            <person name="Bosdet I.E."/>
            <person name="Brent M.R."/>
            <person name="Chiu R."/>
            <person name="Doering T.L."/>
            <person name="Donlin M.J."/>
            <person name="D'Souza C.A."/>
            <person name="Fox D.S."/>
            <person name="Grinberg V."/>
            <person name="Fu J."/>
            <person name="Fukushima M."/>
            <person name="Haas B.J."/>
            <person name="Huang J.C."/>
            <person name="Janbon G."/>
            <person name="Jones S.J.M."/>
            <person name="Koo H.L."/>
            <person name="Krzywinski M.I."/>
            <person name="Kwon-Chung K.J."/>
            <person name="Lengeler K.B."/>
            <person name="Maiti R."/>
            <person name="Marra M.A."/>
            <person name="Marra R.E."/>
            <person name="Mathewson C.A."/>
            <person name="Mitchell T.G."/>
            <person name="Pertea M."/>
            <person name="Riggs F.R."/>
            <person name="Salzberg S.L."/>
            <person name="Schein J.E."/>
            <person name="Shvartsbeyn A."/>
            <person name="Shin H."/>
            <person name="Shumway M."/>
            <person name="Specht C.A."/>
            <person name="Suh B.B."/>
            <person name="Tenney A."/>
            <person name="Utterback T.R."/>
            <person name="Wickes B.L."/>
            <person name="Wortman J.R."/>
            <person name="Wye N.H."/>
            <person name="Kronstad J.W."/>
            <person name="Lodge J.K."/>
            <person name="Heitman J."/>
            <person name="Davis R.W."/>
            <person name="Fraser C.M."/>
            <person name="Hyman R.W."/>
        </authorList>
    </citation>
    <scope>NUCLEOTIDE SEQUENCE [LARGE SCALE GENOMIC DNA]</scope>
    <source>
        <strain>B-3501A</strain>
    </source>
</reference>
<evidence type="ECO:0000250" key="1">
    <source>
        <dbReference type="UniProtKB" id="Q04401"/>
    </source>
</evidence>
<evidence type="ECO:0000250" key="2">
    <source>
        <dbReference type="UniProtKB" id="Q8SZ16"/>
    </source>
</evidence>
<evidence type="ECO:0000255" key="3"/>
<evidence type="ECO:0000256" key="4">
    <source>
        <dbReference type="SAM" id="MobiDB-lite"/>
    </source>
</evidence>
<evidence type="ECO:0000305" key="5"/>
<organism>
    <name type="scientific">Cryptococcus neoformans var. neoformans serotype D (strain B-3501A)</name>
    <name type="common">Filobasidiella neoformans</name>
    <dbReference type="NCBI Taxonomy" id="283643"/>
    <lineage>
        <taxon>Eukaryota</taxon>
        <taxon>Fungi</taxon>
        <taxon>Dikarya</taxon>
        <taxon>Basidiomycota</taxon>
        <taxon>Agaricomycotina</taxon>
        <taxon>Tremellomycetes</taxon>
        <taxon>Tremellales</taxon>
        <taxon>Cryptococcaceae</taxon>
        <taxon>Cryptococcus</taxon>
        <taxon>Cryptococcus neoformans species complex</taxon>
    </lineage>
</organism>
<dbReference type="EMBL" id="AAEY01000007">
    <property type="protein sequence ID" value="EAL22718.1"/>
    <property type="molecule type" value="Genomic_DNA"/>
</dbReference>
<dbReference type="RefSeq" id="XP_777365.1">
    <property type="nucleotide sequence ID" value="XM_772272.1"/>
</dbReference>
<dbReference type="SMR" id="P0CM01"/>
<dbReference type="EnsemblFungi" id="AAW41925">
    <property type="protein sequence ID" value="AAW41925"/>
    <property type="gene ID" value="CNB04080"/>
</dbReference>
<dbReference type="GeneID" id="4934258"/>
<dbReference type="KEGG" id="cnb:CNBB1660"/>
<dbReference type="VEuPathDB" id="FungiDB:CNBB1660"/>
<dbReference type="HOGENOM" id="CLU_102310_1_0_1"/>
<dbReference type="OrthoDB" id="5465at5206"/>
<dbReference type="GO" id="GO:0005758">
    <property type="term" value="C:mitochondrial intermembrane space"/>
    <property type="evidence" value="ECO:0007669"/>
    <property type="project" value="EnsemblFungi"/>
</dbReference>
<dbReference type="GO" id="GO:0005759">
    <property type="term" value="C:mitochondrial matrix"/>
    <property type="evidence" value="ECO:0007669"/>
    <property type="project" value="UniProtKB-SubCell"/>
</dbReference>
<dbReference type="GO" id="GO:0015976">
    <property type="term" value="P:carbon utilization"/>
    <property type="evidence" value="ECO:0007669"/>
    <property type="project" value="EnsemblFungi"/>
</dbReference>
<dbReference type="GO" id="GO:0006094">
    <property type="term" value="P:gluconeogenesis"/>
    <property type="evidence" value="ECO:0007669"/>
    <property type="project" value="UniProtKB-KW"/>
</dbReference>
<dbReference type="GO" id="GO:0034553">
    <property type="term" value="P:mitochondrial respiratory chain complex II assembly"/>
    <property type="evidence" value="ECO:0007669"/>
    <property type="project" value="EnsemblFungi"/>
</dbReference>
<dbReference type="GO" id="GO:0006111">
    <property type="term" value="P:regulation of gluconeogenesis"/>
    <property type="evidence" value="ECO:0007669"/>
    <property type="project" value="EnsemblFungi"/>
</dbReference>
<dbReference type="GO" id="GO:0006105">
    <property type="term" value="P:succinate metabolic process"/>
    <property type="evidence" value="ECO:0007669"/>
    <property type="project" value="TreeGrafter"/>
</dbReference>
<dbReference type="CDD" id="cd20270">
    <property type="entry name" value="Complex1_LYR_SDHAF3_LYRM10"/>
    <property type="match status" value="1"/>
</dbReference>
<dbReference type="InterPro" id="IPR008381">
    <property type="entry name" value="SDHAF3/Sdh7"/>
</dbReference>
<dbReference type="PANTHER" id="PTHR13137">
    <property type="entry name" value="DC11 ACN9 HOMOLOG"/>
    <property type="match status" value="1"/>
</dbReference>
<dbReference type="PANTHER" id="PTHR13137:SF6">
    <property type="entry name" value="SUCCINATE DEHYDROGENASE ASSEMBLY FACTOR 3, MITOCHONDRIAL"/>
    <property type="match status" value="1"/>
</dbReference>
<dbReference type="Pfam" id="PF13233">
    <property type="entry name" value="Complex1_LYR_2"/>
    <property type="match status" value="1"/>
</dbReference>
<feature type="transit peptide" description="Mitochondrion" evidence="3">
    <location>
        <begin position="1"/>
        <end position="51"/>
    </location>
</feature>
<feature type="chain" id="PRO_0000410001" description="Succinate dehydrogenase assembly factor 3, mitochondrial">
    <location>
        <begin position="52"/>
        <end position="164"/>
    </location>
</feature>
<feature type="region of interest" description="Disordered" evidence="4">
    <location>
        <begin position="136"/>
        <end position="164"/>
    </location>
</feature>
<feature type="compositionally biased region" description="Basic and acidic residues" evidence="4">
    <location>
        <begin position="136"/>
        <end position="145"/>
    </location>
</feature>
<feature type="compositionally biased region" description="Polar residues" evidence="4">
    <location>
        <begin position="153"/>
        <end position="164"/>
    </location>
</feature>
<comment type="function">
    <text evidence="1 2">Plays an essential role in the assembly of succinate dehydrogenase (SDH), an enzyme complex (also referred to as respiratory complex II) that is a component of both the tricarboxylic acid (TCA) cycle and the mitochondrial electron transport chain, and which couples the oxidation of succinate to fumarate with the reduction of ubiquinone (coenzyme Q) to ubiquinol. Promotes maturation of the iron-sulfur protein subunit of the SDH catalytic dimer, protecting it from the deleterious effects of oxidants. May act together with SDHAF1.</text>
</comment>
<comment type="subunit">
    <text evidence="1">Interacts with the iron-sulfur protein subunit within the SDH catalytic dimer.</text>
</comment>
<comment type="subcellular location">
    <subcellularLocation>
        <location evidence="1">Mitochondrion matrix</location>
    </subcellularLocation>
</comment>
<comment type="similarity">
    <text evidence="5">Belongs to the complex I LYR family. SDHAF3 subfamily.</text>
</comment>
<keyword id="KW-0143">Chaperone</keyword>
<keyword id="KW-0312">Gluconeogenesis</keyword>
<keyword id="KW-0496">Mitochondrion</keyword>
<keyword id="KW-0809">Transit peptide</keyword>
<sequence>MRPTLLRLANASGPLPLSVSQASVQLIPPIPLYRRLLRAHRLLPVDMRYMGDSYVKSEFRLTRTTDNPLHIIGFLSQWKMYLDEIESSLIRPDGRKQGQAVEWRGKKLDTGAFEKLSTEQVGQLYELMHATKDVWKSPEQIEREANSAGVSPVNPNDPTTAGNS</sequence>
<protein>
    <recommendedName>
        <fullName evidence="1">Succinate dehydrogenase assembly factor 3, mitochondrial</fullName>
        <shortName evidence="1">SDH assembly factor 3</shortName>
        <shortName evidence="1">SDHAF3</shortName>
    </recommendedName>
</protein>